<proteinExistence type="inferred from homology"/>
<feature type="chain" id="PRO_1000063337" description="Phosphoribosyl-ATP pyrophosphatase">
    <location>
        <begin position="1"/>
        <end position="110"/>
    </location>
</feature>
<gene>
    <name evidence="1" type="primary">hisE</name>
    <name type="ordered locus">NT01CX_1067</name>
</gene>
<name>HIS2_CLONN</name>
<reference key="1">
    <citation type="journal article" date="2006" name="Nat. Biotechnol.">
        <title>The genome and transcriptomes of the anti-tumor agent Clostridium novyi-NT.</title>
        <authorList>
            <person name="Bettegowda C."/>
            <person name="Huang X."/>
            <person name="Lin J."/>
            <person name="Cheong I."/>
            <person name="Kohli M."/>
            <person name="Szabo S.A."/>
            <person name="Zhang X."/>
            <person name="Diaz L.A. Jr."/>
            <person name="Velculescu V.E."/>
            <person name="Parmigiani G."/>
            <person name="Kinzler K.W."/>
            <person name="Vogelstein B."/>
            <person name="Zhou S."/>
        </authorList>
    </citation>
    <scope>NUCLEOTIDE SEQUENCE [LARGE SCALE GENOMIC DNA]</scope>
    <source>
        <strain>NT</strain>
    </source>
</reference>
<comment type="catalytic activity">
    <reaction evidence="1">
        <text>1-(5-phospho-beta-D-ribosyl)-ATP + H2O = 1-(5-phospho-beta-D-ribosyl)-5'-AMP + diphosphate + H(+)</text>
        <dbReference type="Rhea" id="RHEA:22828"/>
        <dbReference type="ChEBI" id="CHEBI:15377"/>
        <dbReference type="ChEBI" id="CHEBI:15378"/>
        <dbReference type="ChEBI" id="CHEBI:33019"/>
        <dbReference type="ChEBI" id="CHEBI:59457"/>
        <dbReference type="ChEBI" id="CHEBI:73183"/>
        <dbReference type="EC" id="3.6.1.31"/>
    </reaction>
</comment>
<comment type="pathway">
    <text evidence="1">Amino-acid biosynthesis; L-histidine biosynthesis; L-histidine from 5-phospho-alpha-D-ribose 1-diphosphate: step 2/9.</text>
</comment>
<comment type="subcellular location">
    <subcellularLocation>
        <location evidence="1">Cytoplasm</location>
    </subcellularLocation>
</comment>
<comment type="similarity">
    <text evidence="1">Belongs to the PRA-PH family.</text>
</comment>
<protein>
    <recommendedName>
        <fullName evidence="1">Phosphoribosyl-ATP pyrophosphatase</fullName>
        <shortName evidence="1">PRA-PH</shortName>
        <ecNumber evidence="1">3.6.1.31</ecNumber>
    </recommendedName>
</protein>
<keyword id="KW-0028">Amino-acid biosynthesis</keyword>
<keyword id="KW-0067">ATP-binding</keyword>
<keyword id="KW-0963">Cytoplasm</keyword>
<keyword id="KW-0368">Histidine biosynthesis</keyword>
<keyword id="KW-0378">Hydrolase</keyword>
<keyword id="KW-0547">Nucleotide-binding</keyword>
<keyword id="KW-1185">Reference proteome</keyword>
<organism>
    <name type="scientific">Clostridium novyi (strain NT)</name>
    <dbReference type="NCBI Taxonomy" id="386415"/>
    <lineage>
        <taxon>Bacteria</taxon>
        <taxon>Bacillati</taxon>
        <taxon>Bacillota</taxon>
        <taxon>Clostridia</taxon>
        <taxon>Eubacteriales</taxon>
        <taxon>Clostridiaceae</taxon>
        <taxon>Clostridium</taxon>
    </lineage>
</organism>
<sequence length="110" mass="12894">MDNIDVIEELYNVILDRKENGKENSYTNYLFEKGIDKILKKVGEETTEVIVAAKNTNKDDLIAEVCDVIYHMVVLMVEKEVKLEDIKNELNKRRKKVGNKKPERRKIENI</sequence>
<evidence type="ECO:0000255" key="1">
    <source>
        <dbReference type="HAMAP-Rule" id="MF_01020"/>
    </source>
</evidence>
<accession>A0PXP9</accession>
<dbReference type="EC" id="3.6.1.31" evidence="1"/>
<dbReference type="EMBL" id="CP000382">
    <property type="protein sequence ID" value="ABK61603.1"/>
    <property type="molecule type" value="Genomic_DNA"/>
</dbReference>
<dbReference type="RefSeq" id="WP_011721171.1">
    <property type="nucleotide sequence ID" value="NC_008593.1"/>
</dbReference>
<dbReference type="SMR" id="A0PXP9"/>
<dbReference type="STRING" id="386415.NT01CX_1067"/>
<dbReference type="KEGG" id="cno:NT01CX_1067"/>
<dbReference type="eggNOG" id="COG0140">
    <property type="taxonomic scope" value="Bacteria"/>
</dbReference>
<dbReference type="HOGENOM" id="CLU_123337_0_0_9"/>
<dbReference type="UniPathway" id="UPA00031">
    <property type="reaction ID" value="UER00007"/>
</dbReference>
<dbReference type="Proteomes" id="UP000008220">
    <property type="component" value="Chromosome"/>
</dbReference>
<dbReference type="GO" id="GO:0005737">
    <property type="term" value="C:cytoplasm"/>
    <property type="evidence" value="ECO:0007669"/>
    <property type="project" value="UniProtKB-SubCell"/>
</dbReference>
<dbReference type="GO" id="GO:0005524">
    <property type="term" value="F:ATP binding"/>
    <property type="evidence" value="ECO:0007669"/>
    <property type="project" value="UniProtKB-KW"/>
</dbReference>
<dbReference type="GO" id="GO:0004636">
    <property type="term" value="F:phosphoribosyl-ATP diphosphatase activity"/>
    <property type="evidence" value="ECO:0007669"/>
    <property type="project" value="UniProtKB-UniRule"/>
</dbReference>
<dbReference type="GO" id="GO:0000105">
    <property type="term" value="P:L-histidine biosynthetic process"/>
    <property type="evidence" value="ECO:0007669"/>
    <property type="project" value="UniProtKB-UniRule"/>
</dbReference>
<dbReference type="CDD" id="cd11534">
    <property type="entry name" value="NTP-PPase_HisIE_like"/>
    <property type="match status" value="1"/>
</dbReference>
<dbReference type="Gene3D" id="1.10.287.1080">
    <property type="entry name" value="MazG-like"/>
    <property type="match status" value="1"/>
</dbReference>
<dbReference type="HAMAP" id="MF_01020">
    <property type="entry name" value="HisE"/>
    <property type="match status" value="1"/>
</dbReference>
<dbReference type="InterPro" id="IPR008179">
    <property type="entry name" value="HisE"/>
</dbReference>
<dbReference type="InterPro" id="IPR021130">
    <property type="entry name" value="PRib-ATP_PPHydrolase-like"/>
</dbReference>
<dbReference type="NCBIfam" id="TIGR03188">
    <property type="entry name" value="histidine_hisI"/>
    <property type="match status" value="1"/>
</dbReference>
<dbReference type="PANTHER" id="PTHR42945">
    <property type="entry name" value="HISTIDINE BIOSYNTHESIS BIFUNCTIONAL PROTEIN"/>
    <property type="match status" value="1"/>
</dbReference>
<dbReference type="PANTHER" id="PTHR42945:SF9">
    <property type="entry name" value="HISTIDINE BIOSYNTHESIS BIFUNCTIONAL PROTEIN HISIE"/>
    <property type="match status" value="1"/>
</dbReference>
<dbReference type="Pfam" id="PF01503">
    <property type="entry name" value="PRA-PH"/>
    <property type="match status" value="1"/>
</dbReference>
<dbReference type="SUPFAM" id="SSF101386">
    <property type="entry name" value="all-alpha NTP pyrophosphatases"/>
    <property type="match status" value="1"/>
</dbReference>